<proteinExistence type="evidence at protein level"/>
<accession>A4KA54</accession>
<evidence type="ECO:0000250" key="1"/>
<evidence type="ECO:0000305" key="2"/>
<evidence type="ECO:0000305" key="3">
    <source>
    </source>
</evidence>
<keyword id="KW-0009">Actin-binding</keyword>
<keyword id="KW-0020">Allergen</keyword>
<keyword id="KW-0963">Cytoplasm</keyword>
<keyword id="KW-0206">Cytoskeleton</keyword>
<keyword id="KW-1015">Disulfide bond</keyword>
<keyword id="KW-0597">Phosphoprotein</keyword>
<dbReference type="EMBL" id="DQ663558">
    <property type="protein sequence ID" value="ABG81311.1"/>
    <property type="molecule type" value="mRNA"/>
</dbReference>
<dbReference type="SMR" id="A4KA54"/>
<dbReference type="Allergome" id="490">
    <property type="allergen name" value="Ole e 2"/>
</dbReference>
<dbReference type="GO" id="GO:0005938">
    <property type="term" value="C:cell cortex"/>
    <property type="evidence" value="ECO:0007669"/>
    <property type="project" value="TreeGrafter"/>
</dbReference>
<dbReference type="GO" id="GO:0005856">
    <property type="term" value="C:cytoskeleton"/>
    <property type="evidence" value="ECO:0007669"/>
    <property type="project" value="UniProtKB-SubCell"/>
</dbReference>
<dbReference type="GO" id="GO:0003785">
    <property type="term" value="F:actin monomer binding"/>
    <property type="evidence" value="ECO:0007669"/>
    <property type="project" value="TreeGrafter"/>
</dbReference>
<dbReference type="CDD" id="cd00148">
    <property type="entry name" value="PROF"/>
    <property type="match status" value="1"/>
</dbReference>
<dbReference type="FunFam" id="3.30.450.30:FF:000001">
    <property type="entry name" value="Profilin"/>
    <property type="match status" value="1"/>
</dbReference>
<dbReference type="Gene3D" id="3.30.450.30">
    <property type="entry name" value="Dynein light chain 2a, cytoplasmic"/>
    <property type="match status" value="1"/>
</dbReference>
<dbReference type="InterPro" id="IPR048278">
    <property type="entry name" value="PFN"/>
</dbReference>
<dbReference type="InterPro" id="IPR005455">
    <property type="entry name" value="PFN_euk"/>
</dbReference>
<dbReference type="InterPro" id="IPR036140">
    <property type="entry name" value="PFN_sf"/>
</dbReference>
<dbReference type="InterPro" id="IPR027310">
    <property type="entry name" value="Profilin_CS"/>
</dbReference>
<dbReference type="PANTHER" id="PTHR11604">
    <property type="entry name" value="PROFILIN"/>
    <property type="match status" value="1"/>
</dbReference>
<dbReference type="PANTHER" id="PTHR11604:SF51">
    <property type="entry name" value="PROFILIN-A"/>
    <property type="match status" value="1"/>
</dbReference>
<dbReference type="Pfam" id="PF00235">
    <property type="entry name" value="Profilin"/>
    <property type="match status" value="1"/>
</dbReference>
<dbReference type="PRINTS" id="PR00392">
    <property type="entry name" value="PROFILIN"/>
</dbReference>
<dbReference type="PRINTS" id="PR01640">
    <property type="entry name" value="PROFILINPLNT"/>
</dbReference>
<dbReference type="SMART" id="SM00392">
    <property type="entry name" value="PROF"/>
    <property type="match status" value="1"/>
</dbReference>
<dbReference type="SUPFAM" id="SSF55770">
    <property type="entry name" value="Profilin (actin-binding protein)"/>
    <property type="match status" value="1"/>
</dbReference>
<dbReference type="PROSITE" id="PS00414">
    <property type="entry name" value="PROFILIN"/>
    <property type="match status" value="1"/>
</dbReference>
<protein>
    <recommendedName>
        <fullName>Profilin-9</fullName>
    </recommendedName>
    <alternativeName>
        <fullName>Pollen allergen Ole e 2</fullName>
    </alternativeName>
    <allergenName>Ole e 2</allergenName>
</protein>
<sequence>MSWQAYVDEHLMCEIEGHHLTSAAIVGHDGAVWAQSTAFPQFKTEEMTNIMKDFDEPGFLAPTGLFLGPTKYMVIQGEPGAVIRGKKGSGGITVKKTGQAMVVGIYDEPMTPGQCNMVVERLGDYLLNRA</sequence>
<name>PROCN_OLEEU</name>
<reference key="1">
    <citation type="journal article" date="2012" name="PLoS ONE">
        <title>Characterization of profilin polymorphism in pollen with a focus on multifunctionality.</title>
        <authorList>
            <person name="Jimenez-Lopez J.C."/>
            <person name="Morales S."/>
            <person name="Castro A.J."/>
            <person name="Volkmann D."/>
            <person name="Rodriguez-Garcia M.I."/>
            <person name="Alche Jde D."/>
        </authorList>
    </citation>
    <scope>NUCLEOTIDE SEQUENCE [MRNA]</scope>
    <scope>POLYMORPHISM</scope>
    <source>
        <strain>cv. Picual</strain>
    </source>
</reference>
<reference key="2">
    <citation type="journal article" date="2013" name="PLoS ONE">
        <title>Analysis of the effects of polymorphism on pollen profilin structural functionality and the generation of conformational, T- and B-cell epitopes.</title>
        <authorList>
            <person name="Jimenez-Lopez J.C."/>
            <person name="Rodriguez-Garcia M.I."/>
            <person name="Alche J.D."/>
        </authorList>
    </citation>
    <scope>3D-STRUCTURE MODELING</scope>
    <scope>DISULFIDE BOND</scope>
</reference>
<comment type="function">
    <text evidence="1">Binds to actin and affects the structure of the cytoskeleton. At high concentrations, profilin prevents the polymerization of actin, whereas it enhances it at low concentrations (By similarity).</text>
</comment>
<comment type="subunit">
    <text evidence="1">Occurs in many kinds of cells as a complex with monomeric actin in a 1:1 ratio.</text>
</comment>
<comment type="subcellular location">
    <subcellularLocation>
        <location evidence="1">Cytoplasm</location>
        <location evidence="1">Cytoskeleton</location>
    </subcellularLocation>
</comment>
<comment type="PTM">
    <text evidence="1">Phosphorylated by MAP kinases.</text>
</comment>
<comment type="polymorphism">
    <text>Several isoforms of the allergen exist due to polymorphism.</text>
</comment>
<comment type="allergen">
    <text>Causes an allergic reaction in human.</text>
</comment>
<comment type="miscellaneous">
    <text evidence="3">The variability of the residues taking part of IgE-binding epitopes might be responsible of the difference in cross-reactivity among olive pollen cultivars, and between distantly related pollen species, leading to a variable range of allergy reactions among atopic patients.</text>
</comment>
<comment type="similarity">
    <text evidence="2">Belongs to the profilin family.</text>
</comment>
<feature type="initiator methionine" description="Removed" evidence="1">
    <location>
        <position position="1"/>
    </location>
</feature>
<feature type="chain" id="PRO_0000425057" description="Profilin-9">
    <location>
        <begin position="2"/>
        <end position="130"/>
    </location>
</feature>
<feature type="short sequence motif" description="Involved in PIP2 interaction">
    <location>
        <begin position="81"/>
        <end position="97"/>
    </location>
</feature>
<feature type="modified residue" description="Phosphothreonine" evidence="1">
    <location>
        <position position="111"/>
    </location>
</feature>
<feature type="disulfide bond" evidence="3">
    <location>
        <begin position="13"/>
        <end position="115"/>
    </location>
</feature>
<organism>
    <name type="scientific">Olea europaea</name>
    <name type="common">Common olive</name>
    <dbReference type="NCBI Taxonomy" id="4146"/>
    <lineage>
        <taxon>Eukaryota</taxon>
        <taxon>Viridiplantae</taxon>
        <taxon>Streptophyta</taxon>
        <taxon>Embryophyta</taxon>
        <taxon>Tracheophyta</taxon>
        <taxon>Spermatophyta</taxon>
        <taxon>Magnoliopsida</taxon>
        <taxon>eudicotyledons</taxon>
        <taxon>Gunneridae</taxon>
        <taxon>Pentapetalae</taxon>
        <taxon>asterids</taxon>
        <taxon>lamiids</taxon>
        <taxon>Lamiales</taxon>
        <taxon>Oleaceae</taxon>
        <taxon>Oleeae</taxon>
        <taxon>Olea</taxon>
    </lineage>
</organism>